<protein>
    <recommendedName>
        <fullName evidence="1">Arginine biosynthesis bifunctional protein ArgJ, mitochondrial</fullName>
    </recommendedName>
    <domain>
        <recommendedName>
            <fullName evidence="1">Glutamate N-acetyltransferase</fullName>
            <shortName evidence="1">GAT</shortName>
            <ecNumber evidence="1">2.3.1.35</ecNumber>
        </recommendedName>
        <alternativeName>
            <fullName evidence="1">Ornithine acetyltransferase</fullName>
            <shortName evidence="1">OATase</shortName>
        </alternativeName>
        <alternativeName>
            <fullName evidence="1">Ornithine transacetylase</fullName>
        </alternativeName>
    </domain>
    <domain>
        <recommendedName>
            <fullName evidence="1">Amino-acid acetyltransferase</fullName>
            <ecNumber evidence="1">2.3.1.1</ecNumber>
        </recommendedName>
        <alternativeName>
            <fullName evidence="1">N-acetylglutamate synthase</fullName>
            <shortName evidence="1">AGS</shortName>
        </alternativeName>
    </domain>
    <component>
        <recommendedName>
            <fullName evidence="1">Arginine biosynthesis bifunctional protein ArgJ alpha chain</fullName>
        </recommendedName>
    </component>
    <component>
        <recommendedName>
            <fullName evidence="1">Arginine biosynthesis bifunctional protein ArgJ beta chain</fullName>
        </recommendedName>
    </component>
</protein>
<name>ARGJ_CANAW</name>
<proteinExistence type="inferred from homology"/>
<feature type="chain" id="PRO_0000398030" description="Arginine biosynthesis bifunctional protein ArgJ alpha chain" evidence="1">
    <location>
        <begin position="1"/>
        <end position="211"/>
    </location>
</feature>
<feature type="chain" id="PRO_0000398031" description="Arginine biosynthesis bifunctional protein ArgJ beta chain" evidence="1">
    <location>
        <begin position="212"/>
        <end position="439"/>
    </location>
</feature>
<feature type="active site" description="Nucleophile" evidence="1">
    <location>
        <position position="212"/>
    </location>
</feature>
<feature type="binding site" evidence="1">
    <location>
        <position position="175"/>
    </location>
    <ligand>
        <name>substrate</name>
    </ligand>
</feature>
<feature type="binding site" evidence="1">
    <location>
        <position position="201"/>
    </location>
    <ligand>
        <name>substrate</name>
    </ligand>
</feature>
<feature type="binding site" evidence="1">
    <location>
        <position position="212"/>
    </location>
    <ligand>
        <name>substrate</name>
    </ligand>
</feature>
<feature type="binding site" evidence="1">
    <location>
        <position position="301"/>
    </location>
    <ligand>
        <name>substrate</name>
    </ligand>
</feature>
<feature type="binding site" evidence="1">
    <location>
        <position position="434"/>
    </location>
    <ligand>
        <name>substrate</name>
    </ligand>
</feature>
<feature type="binding site" evidence="1">
    <location>
        <position position="439"/>
    </location>
    <ligand>
        <name>substrate</name>
    </ligand>
</feature>
<feature type="site" description="Involved in the stabilization of negative charge on the oxyanion by the formation of the oxyanion hole" evidence="1">
    <location>
        <position position="135"/>
    </location>
</feature>
<feature type="site" description="Involved in the stabilization of negative charge on the oxyanion by the formation of the oxyanion hole" evidence="1">
    <location>
        <position position="136"/>
    </location>
</feature>
<feature type="site" description="Cleavage; by autolysis" evidence="1">
    <location>
        <begin position="211"/>
        <end position="212"/>
    </location>
</feature>
<gene>
    <name type="ORF">CAWG_05565</name>
</gene>
<reference key="1">
    <citation type="journal article" date="2009" name="Nature">
        <title>Evolution of pathogenicity and sexual reproduction in eight Candida genomes.</title>
        <authorList>
            <person name="Butler G."/>
            <person name="Rasmussen M.D."/>
            <person name="Lin M.F."/>
            <person name="Santos M.A.S."/>
            <person name="Sakthikumar S."/>
            <person name="Munro C.A."/>
            <person name="Rheinbay E."/>
            <person name="Grabherr M."/>
            <person name="Forche A."/>
            <person name="Reedy J.L."/>
            <person name="Agrafioti I."/>
            <person name="Arnaud M.B."/>
            <person name="Bates S."/>
            <person name="Brown A.J.P."/>
            <person name="Brunke S."/>
            <person name="Costanzo M.C."/>
            <person name="Fitzpatrick D.A."/>
            <person name="de Groot P.W.J."/>
            <person name="Harris D."/>
            <person name="Hoyer L.L."/>
            <person name="Hube B."/>
            <person name="Klis F.M."/>
            <person name="Kodira C."/>
            <person name="Lennard N."/>
            <person name="Logue M.E."/>
            <person name="Martin R."/>
            <person name="Neiman A.M."/>
            <person name="Nikolaou E."/>
            <person name="Quail M.A."/>
            <person name="Quinn J."/>
            <person name="Santos M.C."/>
            <person name="Schmitzberger F.F."/>
            <person name="Sherlock G."/>
            <person name="Shah P."/>
            <person name="Silverstein K.A.T."/>
            <person name="Skrzypek M.S."/>
            <person name="Soll D."/>
            <person name="Staggs R."/>
            <person name="Stansfield I."/>
            <person name="Stumpf M.P.H."/>
            <person name="Sudbery P.E."/>
            <person name="Srikantha T."/>
            <person name="Zeng Q."/>
            <person name="Berman J."/>
            <person name="Berriman M."/>
            <person name="Heitman J."/>
            <person name="Gow N.A.R."/>
            <person name="Lorenz M.C."/>
            <person name="Birren B.W."/>
            <person name="Kellis M."/>
            <person name="Cuomo C.A."/>
        </authorList>
    </citation>
    <scope>NUCLEOTIDE SEQUENCE [LARGE SCALE GENOMIC DNA]</scope>
    <source>
        <strain>WO-1</strain>
    </source>
</reference>
<sequence>MHKVTKFAIRHLSDKASRFVPKAGVYPKGYAVGGIHCGVKKDGKSLDLAILQNTFGKNASAAGVFTVNKFKAAPVQVSKKILKEKSGSGINSFVINSGNANAVTGAQGMKDAEDMVLVTDSVLENPTNSSLVMSTGVIGNNLPIDKILGGIPKLASQHLGNTHQHWIDCATAICTTDTFPKLVTKRFSIGDDTYTLAGLCKGAGMICPNMATLLGFFVTDAPVTPSALQQILKYAVDRSFNSITVDGDMSTNDTIVAMANGAAGGEVIDNTSSCAERYSRLQAEIVDFAQQLAQLVVRDGEGATKFITIRVKDALSYKDAKSIASSIANSSLFKTAMYGKDANWGRILCAIGYADVTSANSVIPEKTSVKFVPVDGSEHLNLLVNGEPEQVDEERASEILQNEDLIVEINLGTNGGQSADFWTCDLSHEYVTINGDYRS</sequence>
<evidence type="ECO:0000255" key="1">
    <source>
        <dbReference type="HAMAP-Rule" id="MF_03124"/>
    </source>
</evidence>
<keyword id="KW-0012">Acyltransferase</keyword>
<keyword id="KW-0028">Amino-acid biosynthesis</keyword>
<keyword id="KW-0055">Arginine biosynthesis</keyword>
<keyword id="KW-0068">Autocatalytic cleavage</keyword>
<keyword id="KW-0496">Mitochondrion</keyword>
<keyword id="KW-0511">Multifunctional enzyme</keyword>
<keyword id="KW-0808">Transferase</keyword>
<organism>
    <name type="scientific">Candida albicans (strain WO-1)</name>
    <name type="common">Yeast</name>
    <dbReference type="NCBI Taxonomy" id="294748"/>
    <lineage>
        <taxon>Eukaryota</taxon>
        <taxon>Fungi</taxon>
        <taxon>Dikarya</taxon>
        <taxon>Ascomycota</taxon>
        <taxon>Saccharomycotina</taxon>
        <taxon>Pichiomycetes</taxon>
        <taxon>Debaryomycetaceae</taxon>
        <taxon>Candida/Lodderomyces clade</taxon>
        <taxon>Candida</taxon>
    </lineage>
</organism>
<dbReference type="EC" id="2.3.1.35" evidence="1"/>
<dbReference type="EC" id="2.3.1.1" evidence="1"/>
<dbReference type="EMBL" id="CM000313">
    <property type="protein sequence ID" value="EEQ47011.1"/>
    <property type="molecule type" value="Genomic_DNA"/>
</dbReference>
<dbReference type="SMR" id="C4YTS0"/>
<dbReference type="MEROPS" id="T05.001"/>
<dbReference type="PaxDb" id="5476-C4YTS0"/>
<dbReference type="VEuPathDB" id="FungiDB:CAWG_05565"/>
<dbReference type="HOGENOM" id="CLU_027172_1_0_1"/>
<dbReference type="OMA" id="WGRIVMA"/>
<dbReference type="OrthoDB" id="10086at766764"/>
<dbReference type="UniPathway" id="UPA00068">
    <property type="reaction ID" value="UER00106"/>
</dbReference>
<dbReference type="UniPathway" id="UPA00068">
    <property type="reaction ID" value="UER00111"/>
</dbReference>
<dbReference type="Proteomes" id="UP000001429">
    <property type="component" value="Chromosome 7"/>
</dbReference>
<dbReference type="GO" id="GO:0005759">
    <property type="term" value="C:mitochondrial matrix"/>
    <property type="evidence" value="ECO:0007669"/>
    <property type="project" value="UniProtKB-SubCell"/>
</dbReference>
<dbReference type="GO" id="GO:0004358">
    <property type="term" value="F:glutamate N-acetyltransferase activity"/>
    <property type="evidence" value="ECO:0007669"/>
    <property type="project" value="UniProtKB-UniRule"/>
</dbReference>
<dbReference type="GO" id="GO:0004042">
    <property type="term" value="F:L-glutamate N-acetyltransferase activity"/>
    <property type="evidence" value="ECO:0007669"/>
    <property type="project" value="UniProtKB-UniRule"/>
</dbReference>
<dbReference type="GO" id="GO:0006526">
    <property type="term" value="P:L-arginine biosynthetic process"/>
    <property type="evidence" value="ECO:0007669"/>
    <property type="project" value="UniProtKB-UniRule"/>
</dbReference>
<dbReference type="GO" id="GO:0006592">
    <property type="term" value="P:ornithine biosynthetic process"/>
    <property type="evidence" value="ECO:0007669"/>
    <property type="project" value="TreeGrafter"/>
</dbReference>
<dbReference type="CDD" id="cd02152">
    <property type="entry name" value="OAT"/>
    <property type="match status" value="1"/>
</dbReference>
<dbReference type="FunFam" id="3.10.20.340:FF:000002">
    <property type="entry name" value="Arginine biosynthesis bifunctional protein ArgJ, mitochondrial"/>
    <property type="match status" value="1"/>
</dbReference>
<dbReference type="FunFam" id="3.30.2330.10:FF:000001">
    <property type="entry name" value="Arginine biosynthesis bifunctional protein ArgJ, mitochondrial"/>
    <property type="match status" value="1"/>
</dbReference>
<dbReference type="FunFam" id="3.60.70.12:FF:000002">
    <property type="entry name" value="Arginine biosynthesis bifunctional protein ArgJ, mitochondrial"/>
    <property type="match status" value="1"/>
</dbReference>
<dbReference type="Gene3D" id="3.30.2330.10">
    <property type="entry name" value="arginine biosynthesis bifunctional protein suprefamily"/>
    <property type="match status" value="1"/>
</dbReference>
<dbReference type="Gene3D" id="3.10.20.340">
    <property type="entry name" value="ArgJ beta chain, C-terminal domain"/>
    <property type="match status" value="1"/>
</dbReference>
<dbReference type="Gene3D" id="3.60.70.12">
    <property type="entry name" value="L-amino peptidase D-ALA esterase/amidase"/>
    <property type="match status" value="1"/>
</dbReference>
<dbReference type="HAMAP" id="MF_01106">
    <property type="entry name" value="ArgJ"/>
    <property type="match status" value="1"/>
</dbReference>
<dbReference type="InterPro" id="IPR002813">
    <property type="entry name" value="Arg_biosynth_ArgJ"/>
</dbReference>
<dbReference type="InterPro" id="IPR016117">
    <property type="entry name" value="ArgJ-like_dom_sf"/>
</dbReference>
<dbReference type="InterPro" id="IPR042195">
    <property type="entry name" value="ArgJ_beta_C"/>
</dbReference>
<dbReference type="NCBIfam" id="TIGR00120">
    <property type="entry name" value="ArgJ"/>
    <property type="match status" value="1"/>
</dbReference>
<dbReference type="NCBIfam" id="NF003802">
    <property type="entry name" value="PRK05388.1"/>
    <property type="match status" value="1"/>
</dbReference>
<dbReference type="PANTHER" id="PTHR23100">
    <property type="entry name" value="ARGININE BIOSYNTHESIS BIFUNCTIONAL PROTEIN ARGJ"/>
    <property type="match status" value="1"/>
</dbReference>
<dbReference type="PANTHER" id="PTHR23100:SF0">
    <property type="entry name" value="ARGININE BIOSYNTHESIS BIFUNCTIONAL PROTEIN ARGJ, MITOCHONDRIAL"/>
    <property type="match status" value="1"/>
</dbReference>
<dbReference type="Pfam" id="PF01960">
    <property type="entry name" value="ArgJ"/>
    <property type="match status" value="1"/>
</dbReference>
<dbReference type="SUPFAM" id="SSF56266">
    <property type="entry name" value="DmpA/ArgJ-like"/>
    <property type="match status" value="1"/>
</dbReference>
<comment type="function">
    <text evidence="1">Catalyzes two activities which are involved in the cyclic version of arginine biosynthesis: the synthesis of acetylglutamate from glutamate and acetyl-CoA, and of ornithine by transacetylation between acetylornithine and glutamate.</text>
</comment>
<comment type="catalytic activity">
    <reaction evidence="1">
        <text>N(2)-acetyl-L-ornithine + L-glutamate = N-acetyl-L-glutamate + L-ornithine</text>
        <dbReference type="Rhea" id="RHEA:15349"/>
        <dbReference type="ChEBI" id="CHEBI:29985"/>
        <dbReference type="ChEBI" id="CHEBI:44337"/>
        <dbReference type="ChEBI" id="CHEBI:46911"/>
        <dbReference type="ChEBI" id="CHEBI:57805"/>
        <dbReference type="EC" id="2.3.1.35"/>
    </reaction>
</comment>
<comment type="catalytic activity">
    <reaction evidence="1">
        <text>L-glutamate + acetyl-CoA = N-acetyl-L-glutamate + CoA + H(+)</text>
        <dbReference type="Rhea" id="RHEA:24292"/>
        <dbReference type="ChEBI" id="CHEBI:15378"/>
        <dbReference type="ChEBI" id="CHEBI:29985"/>
        <dbReference type="ChEBI" id="CHEBI:44337"/>
        <dbReference type="ChEBI" id="CHEBI:57287"/>
        <dbReference type="ChEBI" id="CHEBI:57288"/>
        <dbReference type="EC" id="2.3.1.1"/>
    </reaction>
</comment>
<comment type="pathway">
    <text evidence="1">Amino-acid biosynthesis; L-arginine biosynthesis; L-ornithine and N-acetyl-L-glutamate from L-glutamate and N(2)-acetyl-L-ornithine (cyclic): step 1/1.</text>
</comment>
<comment type="pathway">
    <text evidence="1">Amino-acid biosynthesis; L-arginine biosynthesis; N(2)-acetyl-L-ornithine from L-glutamate: step 1/4.</text>
</comment>
<comment type="subunit">
    <text evidence="1">Heterodimer of an alpha and a beta chain.</text>
</comment>
<comment type="subcellular location">
    <subcellularLocation>
        <location evidence="1">Mitochondrion matrix</location>
    </subcellularLocation>
</comment>
<comment type="PTM">
    <text evidence="1">The alpha and beta chains are autoproteolytically processed from a single precursor protein within the mitochondrion.</text>
</comment>
<comment type="miscellaneous">
    <text evidence="1">This protein may be expected to contain an N-terminal transit peptide but none has been predicted.</text>
</comment>
<comment type="similarity">
    <text evidence="1">Belongs to the ArgJ family.</text>
</comment>
<accession>C4YTS0</accession>